<proteinExistence type="evidence at protein level"/>
<gene>
    <name type="primary">Senp7</name>
    <name type="synonym">Susp2</name>
</gene>
<evidence type="ECO:0000250" key="1">
    <source>
        <dbReference type="UniProtKB" id="Q8BUH8"/>
    </source>
</evidence>
<evidence type="ECO:0000250" key="2">
    <source>
        <dbReference type="UniProtKB" id="Q9BQF6"/>
    </source>
</evidence>
<evidence type="ECO:0000250" key="3">
    <source>
        <dbReference type="UniProtKB" id="Q9HC62"/>
    </source>
</evidence>
<evidence type="ECO:0000256" key="4">
    <source>
        <dbReference type="SAM" id="MobiDB-lite"/>
    </source>
</evidence>
<evidence type="ECO:0000305" key="5"/>
<evidence type="ECO:0007744" key="6">
    <source>
    </source>
</evidence>
<sequence>MDRARPGRRRASSEIVTEGKRKKSSPADLQKITKLLTVKSEDVLAQSPLPKLRGSECWWTRSLRNKVICLDHKTTKAAHGCPPKALPKRHLKVMLTNVLWTDLGREFRKTLPRNDAKLCDTSKVQSDSLPSTSVDSIETCQRLDPLHQSLNLSERIPRVILTDIRQTELGRKYLKIPSVTEASLSDTASPKSEELSSSADGSLESCQNVNHLKSFLSERGSKPSRTGDISAKEAANGRQEQGDDGDIAPEMVTPQSKDFNSGNKGDYHEEGTSNKNTSYSHSETDHTPVSRKRKKRGRSNFHNSHNPKSSVDKSTEYIKEEENESTVSSKLEESNEDSHQDPAPPEGLTPDSLETEATNVCSFVVQEPDVSAASGRACSPNKSSESSVSSEVAENSSAAEKGEASTVKEAPPPGGNSEENQLLMSAEPIVVSSDEEGPVEHKNSVILKLQPSQDYEFMSENQTTSDPQLSELMLGACESVQVSSELCPYNPDMENISCINPNSEMDLKLDFIFTCVYIGKIKGTSKGCITFTKKYIKIPFQVSMNEISLTVDTARLKRFGLWESKDDDHSKRSHAILFLWVSSNYLQDIQTQLENPMLSQQSKANEFIFLELNSPISQREELKLKDIMMEIGATNGELQLSCPLPWVQAFPLFQDLSPQEISFLHYYCASASSFPAVAGADMKKKPVSQPSNADVVKPTYTFLHKQSSGCYSLSITSSPDEEWREVRNTGPVQKLIVYPPPPTKGGLGVTNEDLECLEEGEFLNDVIIDFYLKYLLLEKASDELVERSHIFSSFFYKCLTRKENNLTEDNPDLSVAQRRHRRVRTWTRHINIFNKDYIFVPVNESSHWYLAVICFPWLEEAVYEDFPQTVSQEFQDQQSQHDNKTIDNDPHTTSTVFTSAEESQSTETSMSVPKKMCKRPCILILDSLKAASIQNTVQNLREYLEVEWEVKRKTHREFSKTNMVDLCPKVPKQDNSSDCGVYLLQYVESFFQDPIVNFELPIHLEKWFPRHVIKTKREDIRELILKLHLQQQKGSSS</sequence>
<accession>D3ZF42</accession>
<dbReference type="EC" id="3.4.22.-" evidence="1"/>
<dbReference type="EMBL" id="CH473967">
    <property type="protein sequence ID" value="EDM11051.1"/>
    <property type="molecule type" value="Genomic_DNA"/>
</dbReference>
<dbReference type="RefSeq" id="NP_001099358.1">
    <property type="nucleotide sequence ID" value="NM_001105888.2"/>
</dbReference>
<dbReference type="SMR" id="D3ZF42"/>
<dbReference type="FunCoup" id="D3ZF42">
    <property type="interactions" value="3425"/>
</dbReference>
<dbReference type="STRING" id="10116.ENSRNOP00000043376"/>
<dbReference type="MEROPS" id="C48.009"/>
<dbReference type="iPTMnet" id="D3ZF42"/>
<dbReference type="PhosphoSitePlus" id="D3ZF42"/>
<dbReference type="PaxDb" id="10116-ENSRNOP00000043376"/>
<dbReference type="PeptideAtlas" id="D3ZF42"/>
<dbReference type="GeneID" id="288167"/>
<dbReference type="KEGG" id="rno:288167"/>
<dbReference type="UCSC" id="RGD:1305510">
    <property type="organism name" value="rat"/>
</dbReference>
<dbReference type="AGR" id="RGD:1305510"/>
<dbReference type="CTD" id="57337"/>
<dbReference type="RGD" id="1305510">
    <property type="gene designation" value="Senp7"/>
</dbReference>
<dbReference type="VEuPathDB" id="HostDB:ENSRNOG00000001616"/>
<dbReference type="eggNOG" id="KOG0779">
    <property type="taxonomic scope" value="Eukaryota"/>
</dbReference>
<dbReference type="HOGENOM" id="CLU_011967_0_0_1"/>
<dbReference type="InParanoid" id="D3ZF42"/>
<dbReference type="PhylomeDB" id="D3ZF42"/>
<dbReference type="TreeFam" id="TF350136"/>
<dbReference type="PRO" id="PR:D3ZF42"/>
<dbReference type="Proteomes" id="UP000002494">
    <property type="component" value="Chromosome 11"/>
</dbReference>
<dbReference type="Proteomes" id="UP000234681">
    <property type="component" value="Chromosome 11"/>
</dbReference>
<dbReference type="Bgee" id="ENSRNOG00000001616">
    <property type="expression patterns" value="Expressed in thymus and 19 other cell types or tissues"/>
</dbReference>
<dbReference type="GO" id="GO:0005737">
    <property type="term" value="C:cytoplasm"/>
    <property type="evidence" value="ECO:0000250"/>
    <property type="project" value="UniProtKB"/>
</dbReference>
<dbReference type="GO" id="GO:0005634">
    <property type="term" value="C:nucleus"/>
    <property type="evidence" value="ECO:0000318"/>
    <property type="project" value="GO_Central"/>
</dbReference>
<dbReference type="GO" id="GO:0099524">
    <property type="term" value="C:postsynaptic cytosol"/>
    <property type="evidence" value="ECO:0000266"/>
    <property type="project" value="RGD"/>
</dbReference>
<dbReference type="GO" id="GO:0099523">
    <property type="term" value="C:presynaptic cytosol"/>
    <property type="evidence" value="ECO:0000266"/>
    <property type="project" value="RGD"/>
</dbReference>
<dbReference type="GO" id="GO:0070139">
    <property type="term" value="F:SUMO-specific endopeptidase activity"/>
    <property type="evidence" value="ECO:0000250"/>
    <property type="project" value="UniProtKB"/>
</dbReference>
<dbReference type="GO" id="GO:0140374">
    <property type="term" value="P:antiviral innate immune response"/>
    <property type="evidence" value="ECO:0000250"/>
    <property type="project" value="UniProtKB"/>
</dbReference>
<dbReference type="GO" id="GO:0016926">
    <property type="term" value="P:protein desumoylation"/>
    <property type="evidence" value="ECO:0000250"/>
    <property type="project" value="UniProtKB"/>
</dbReference>
<dbReference type="GO" id="GO:0006508">
    <property type="term" value="P:proteolysis"/>
    <property type="evidence" value="ECO:0007669"/>
    <property type="project" value="UniProtKB-KW"/>
</dbReference>
<dbReference type="FunFam" id="1.10.418.20:FF:000001">
    <property type="entry name" value="sentrin-specific protease 6 isoform X1"/>
    <property type="match status" value="1"/>
</dbReference>
<dbReference type="FunFam" id="3.30.310.130:FF:000001">
    <property type="entry name" value="sentrin-specific protease 6 isoform X1"/>
    <property type="match status" value="1"/>
</dbReference>
<dbReference type="FunFam" id="1.10.418.20:FF:000004">
    <property type="entry name" value="sentrin-specific protease 7 isoform X1"/>
    <property type="match status" value="1"/>
</dbReference>
<dbReference type="FunFam" id="3.30.310.130:FF:000002">
    <property type="entry name" value="SUMO specific peptidase 6"/>
    <property type="match status" value="1"/>
</dbReference>
<dbReference type="Gene3D" id="1.10.418.20">
    <property type="match status" value="1"/>
</dbReference>
<dbReference type="Gene3D" id="3.30.310.130">
    <property type="entry name" value="Ubiquitin-related"/>
    <property type="match status" value="1"/>
</dbReference>
<dbReference type="InterPro" id="IPR038765">
    <property type="entry name" value="Papain-like_cys_pep_sf"/>
</dbReference>
<dbReference type="InterPro" id="IPR003653">
    <property type="entry name" value="Peptidase_C48_C"/>
</dbReference>
<dbReference type="InterPro" id="IPR051947">
    <property type="entry name" value="Sentrin-specific_protease"/>
</dbReference>
<dbReference type="PANTHER" id="PTHR46896">
    <property type="entry name" value="SENTRIN-SPECIFIC PROTEASE"/>
    <property type="match status" value="1"/>
</dbReference>
<dbReference type="PANTHER" id="PTHR46896:SF2">
    <property type="entry name" value="SENTRIN-SPECIFIC PROTEASE 7"/>
    <property type="match status" value="1"/>
</dbReference>
<dbReference type="Pfam" id="PF02902">
    <property type="entry name" value="Peptidase_C48"/>
    <property type="match status" value="1"/>
</dbReference>
<dbReference type="SUPFAM" id="SSF54001">
    <property type="entry name" value="Cysteine proteinases"/>
    <property type="match status" value="1"/>
</dbReference>
<dbReference type="PROSITE" id="PS50600">
    <property type="entry name" value="ULP_PROTEASE"/>
    <property type="match status" value="1"/>
</dbReference>
<reference key="1">
    <citation type="submission" date="2005-07" db="EMBL/GenBank/DDBJ databases">
        <authorList>
            <person name="Mural R.J."/>
            <person name="Adams M.D."/>
            <person name="Myers E.W."/>
            <person name="Smith H.O."/>
            <person name="Venter J.C."/>
        </authorList>
    </citation>
    <scope>NUCLEOTIDE SEQUENCE [LARGE SCALE GENOMIC DNA]</scope>
    <source>
        <strain>Brown Norway</strain>
    </source>
</reference>
<reference key="2">
    <citation type="journal article" date="2012" name="Nat. Commun.">
        <title>Quantitative maps of protein phosphorylation sites across 14 different rat organs and tissues.</title>
        <authorList>
            <person name="Lundby A."/>
            <person name="Secher A."/>
            <person name="Lage K."/>
            <person name="Nordsborg N.B."/>
            <person name="Dmytriyev A."/>
            <person name="Lundby C."/>
            <person name="Olsen J.V."/>
        </authorList>
    </citation>
    <scope>PHOSPHORYLATION [LARGE SCALE ANALYSIS] AT SER-12; SER-13; SER-189; SER-432 AND SER-433</scope>
    <scope>IDENTIFICATION BY MASS SPECTROMETRY [LARGE SCALE ANALYSIS]</scope>
</reference>
<keyword id="KW-0963">Cytoplasm</keyword>
<keyword id="KW-0378">Hydrolase</keyword>
<keyword id="KW-0391">Immunity</keyword>
<keyword id="KW-0399">Innate immunity</keyword>
<keyword id="KW-0597">Phosphoprotein</keyword>
<keyword id="KW-0645">Protease</keyword>
<keyword id="KW-1185">Reference proteome</keyword>
<keyword id="KW-0833">Ubl conjugation pathway</keyword>
<name>SENP7_RAT</name>
<feature type="chain" id="PRO_0000395502" description="Sentrin-specific protease 7">
    <location>
        <begin position="1"/>
        <end position="1037"/>
    </location>
</feature>
<feature type="region of interest" description="Disordered" evidence="4">
    <location>
        <begin position="1"/>
        <end position="28"/>
    </location>
</feature>
<feature type="region of interest" description="Disordered" evidence="4">
    <location>
        <begin position="182"/>
        <end position="420"/>
    </location>
</feature>
<feature type="region of interest" description="Protease" evidence="3">
    <location>
        <begin position="747"/>
        <end position="1037"/>
    </location>
</feature>
<feature type="region of interest" description="Disordered" evidence="4">
    <location>
        <begin position="873"/>
        <end position="910"/>
    </location>
</feature>
<feature type="compositionally biased region" description="Basic residues" evidence="4">
    <location>
        <begin position="1"/>
        <end position="10"/>
    </location>
</feature>
<feature type="compositionally biased region" description="Polar residues" evidence="4">
    <location>
        <begin position="182"/>
        <end position="211"/>
    </location>
</feature>
<feature type="compositionally biased region" description="Polar residues" evidence="4">
    <location>
        <begin position="253"/>
        <end position="263"/>
    </location>
</feature>
<feature type="compositionally biased region" description="Basic residues" evidence="4">
    <location>
        <begin position="289"/>
        <end position="299"/>
    </location>
</feature>
<feature type="compositionally biased region" description="Polar residues" evidence="4">
    <location>
        <begin position="300"/>
        <end position="309"/>
    </location>
</feature>
<feature type="compositionally biased region" description="Basic and acidic residues" evidence="4">
    <location>
        <begin position="310"/>
        <end position="320"/>
    </location>
</feature>
<feature type="compositionally biased region" description="Basic and acidic residues" evidence="4">
    <location>
        <begin position="330"/>
        <end position="340"/>
    </location>
</feature>
<feature type="compositionally biased region" description="Low complexity" evidence="4">
    <location>
        <begin position="381"/>
        <end position="399"/>
    </location>
</feature>
<feature type="compositionally biased region" description="Basic and acidic residues" evidence="4">
    <location>
        <begin position="879"/>
        <end position="890"/>
    </location>
</feature>
<feature type="compositionally biased region" description="Low complexity" evidence="4">
    <location>
        <begin position="898"/>
        <end position="910"/>
    </location>
</feature>
<feature type="active site" evidence="3">
    <location>
        <position position="847"/>
    </location>
</feature>
<feature type="active site" evidence="3">
    <location>
        <position position="926"/>
    </location>
</feature>
<feature type="active site" description="Nucleophile" evidence="3">
    <location>
        <position position="979"/>
    </location>
</feature>
<feature type="modified residue" description="Phosphoserine" evidence="6">
    <location>
        <position position="12"/>
    </location>
</feature>
<feature type="modified residue" description="Phosphoserine" evidence="6">
    <location>
        <position position="13"/>
    </location>
</feature>
<feature type="modified residue" description="Phosphoserine" evidence="2">
    <location>
        <position position="25"/>
    </location>
</feature>
<feature type="modified residue" description="Phosphoserine" evidence="6">
    <location>
        <position position="189"/>
    </location>
</feature>
<feature type="modified residue" description="Phosphoserine" evidence="6">
    <location>
        <position position="432"/>
    </location>
</feature>
<feature type="modified residue" description="Phosphoserine" evidence="6">
    <location>
        <position position="433"/>
    </location>
</feature>
<comment type="function">
    <text evidence="1 2">Protease that acts as a positive regulator of the cGAS-STING pathway by catalyzing desumoylation of CGAS. Desumoylation of CGAS promotes DNA-binding activity of CGAS, subsequent oligomerization and activation (By similarity). Deconjugates SUMO2 and SUMO3 from targeted proteins, but not SUMO1. Catalyzes the deconjugation of poly-SUMO2 and poly-SUMO3 chains. Has very low efficiency in processing full-length SUMO proteins to their mature forms (By similarity).</text>
</comment>
<comment type="subcellular location">
    <subcellularLocation>
        <location evidence="1">Cytoplasm</location>
    </subcellularLocation>
</comment>
<comment type="similarity">
    <text evidence="5">Belongs to the peptidase C48 family.</text>
</comment>
<protein>
    <recommendedName>
        <fullName>Sentrin-specific protease 7</fullName>
        <ecNumber evidence="1">3.4.22.-</ecNumber>
    </recommendedName>
    <alternativeName>
        <fullName>SUMO-1-specific protease 2</fullName>
    </alternativeName>
    <alternativeName>
        <fullName>Sentrin/SUMO-specific protease SENP7</fullName>
    </alternativeName>
</protein>
<organism>
    <name type="scientific">Rattus norvegicus</name>
    <name type="common">Rat</name>
    <dbReference type="NCBI Taxonomy" id="10116"/>
    <lineage>
        <taxon>Eukaryota</taxon>
        <taxon>Metazoa</taxon>
        <taxon>Chordata</taxon>
        <taxon>Craniata</taxon>
        <taxon>Vertebrata</taxon>
        <taxon>Euteleostomi</taxon>
        <taxon>Mammalia</taxon>
        <taxon>Eutheria</taxon>
        <taxon>Euarchontoglires</taxon>
        <taxon>Glires</taxon>
        <taxon>Rodentia</taxon>
        <taxon>Myomorpha</taxon>
        <taxon>Muroidea</taxon>
        <taxon>Muridae</taxon>
        <taxon>Murinae</taxon>
        <taxon>Rattus</taxon>
    </lineage>
</organism>